<dbReference type="EC" id="2.4.1.-"/>
<dbReference type="EMBL" id="CP000480">
    <property type="protein sequence ID" value="ABK71149.1"/>
    <property type="molecule type" value="Genomic_DNA"/>
</dbReference>
<dbReference type="EMBL" id="CP001663">
    <property type="protein sequence ID" value="AFP40604.1"/>
    <property type="status" value="ALT_INIT"/>
    <property type="molecule type" value="Genomic_DNA"/>
</dbReference>
<dbReference type="RefSeq" id="YP_888524.1">
    <property type="nucleotide sequence ID" value="NC_008596.1"/>
</dbReference>
<dbReference type="STRING" id="246196.MSMEG_4247"/>
<dbReference type="CAZy" id="GT87">
    <property type="family name" value="Glycosyltransferase Family 87"/>
</dbReference>
<dbReference type="PaxDb" id="246196-MSMEI_4147"/>
<dbReference type="KEGG" id="msg:MSMEI_4147"/>
<dbReference type="KEGG" id="msm:MSMEG_4247"/>
<dbReference type="PATRIC" id="fig|246196.19.peg.4167"/>
<dbReference type="eggNOG" id="COG5650">
    <property type="taxonomic scope" value="Bacteria"/>
</dbReference>
<dbReference type="OrthoDB" id="9774600at2"/>
<dbReference type="UniPathway" id="UPA00949"/>
<dbReference type="Proteomes" id="UP000000757">
    <property type="component" value="Chromosome"/>
</dbReference>
<dbReference type="Proteomes" id="UP000006158">
    <property type="component" value="Chromosome"/>
</dbReference>
<dbReference type="GO" id="GO:0005886">
    <property type="term" value="C:plasma membrane"/>
    <property type="evidence" value="ECO:0007669"/>
    <property type="project" value="UniProtKB-SubCell"/>
</dbReference>
<dbReference type="GO" id="GO:0016758">
    <property type="term" value="F:hexosyltransferase activity"/>
    <property type="evidence" value="ECO:0007669"/>
    <property type="project" value="InterPro"/>
</dbReference>
<dbReference type="GO" id="GO:0046488">
    <property type="term" value="P:phosphatidylinositol metabolic process"/>
    <property type="evidence" value="ECO:0007669"/>
    <property type="project" value="UniProtKB-UniPathway"/>
</dbReference>
<dbReference type="GO" id="GO:0008654">
    <property type="term" value="P:phospholipid biosynthetic process"/>
    <property type="evidence" value="ECO:0007669"/>
    <property type="project" value="UniProtKB-KW"/>
</dbReference>
<dbReference type="InterPro" id="IPR018584">
    <property type="entry name" value="GT87"/>
</dbReference>
<dbReference type="Pfam" id="PF09594">
    <property type="entry name" value="GT87"/>
    <property type="match status" value="1"/>
</dbReference>
<name>PIMG_MYCS2</name>
<organism>
    <name type="scientific">Mycolicibacterium smegmatis (strain ATCC 700084 / mc(2)155)</name>
    <name type="common">Mycobacterium smegmatis</name>
    <dbReference type="NCBI Taxonomy" id="246196"/>
    <lineage>
        <taxon>Bacteria</taxon>
        <taxon>Bacillati</taxon>
        <taxon>Actinomycetota</taxon>
        <taxon>Actinomycetes</taxon>
        <taxon>Mycobacteriales</taxon>
        <taxon>Mycobacteriaceae</taxon>
        <taxon>Mycolicibacterium</taxon>
    </lineage>
</organism>
<keyword id="KW-1003">Cell membrane</keyword>
<keyword id="KW-0328">Glycosyltransferase</keyword>
<keyword id="KW-0444">Lipid biosynthesis</keyword>
<keyword id="KW-0443">Lipid metabolism</keyword>
<keyword id="KW-0472">Membrane</keyword>
<keyword id="KW-0594">Phospholipid biosynthesis</keyword>
<keyword id="KW-1208">Phospholipid metabolism</keyword>
<keyword id="KW-1185">Reference proteome</keyword>
<keyword id="KW-0808">Transferase</keyword>
<keyword id="KW-0812">Transmembrane</keyword>
<keyword id="KW-1133">Transmembrane helix</keyword>
<keyword id="KW-0843">Virulence</keyword>
<proteinExistence type="evidence at protein level"/>
<evidence type="ECO:0000255" key="1"/>
<evidence type="ECO:0000256" key="2">
    <source>
        <dbReference type="SAM" id="MobiDB-lite"/>
    </source>
</evidence>
<evidence type="ECO:0000269" key="3">
    <source>
    </source>
</evidence>
<evidence type="ECO:0000305" key="4"/>
<feature type="chain" id="PRO_0000393741" description="Polyprenol-phosphate-mannose-dependent alpha-(1-2)-phosphatidylinositol mannoside mannosyltransferase">
    <location>
        <begin position="1"/>
        <end position="440"/>
    </location>
</feature>
<feature type="transmembrane region" description="Helical" evidence="1">
    <location>
        <begin position="15"/>
        <end position="35"/>
    </location>
</feature>
<feature type="transmembrane region" description="Helical" evidence="1">
    <location>
        <begin position="87"/>
        <end position="107"/>
    </location>
</feature>
<feature type="transmembrane region" description="Helical" evidence="1">
    <location>
        <begin position="109"/>
        <end position="129"/>
    </location>
</feature>
<feature type="transmembrane region" description="Helical" evidence="1">
    <location>
        <begin position="144"/>
        <end position="161"/>
    </location>
</feature>
<feature type="transmembrane region" description="Helical" evidence="1">
    <location>
        <begin position="164"/>
        <end position="184"/>
    </location>
</feature>
<feature type="transmembrane region" description="Helical" evidence="1">
    <location>
        <begin position="193"/>
        <end position="213"/>
    </location>
</feature>
<feature type="transmembrane region" description="Helical" evidence="1">
    <location>
        <begin position="224"/>
        <end position="244"/>
    </location>
</feature>
<feature type="transmembrane region" description="Helical" evidence="1">
    <location>
        <begin position="281"/>
        <end position="301"/>
    </location>
</feature>
<feature type="transmembrane region" description="Helical" evidence="1">
    <location>
        <begin position="316"/>
        <end position="336"/>
    </location>
</feature>
<feature type="transmembrane region" description="Helical" evidence="1">
    <location>
        <begin position="360"/>
        <end position="380"/>
    </location>
</feature>
<feature type="transmembrane region" description="Helical" evidence="1">
    <location>
        <begin position="395"/>
        <end position="415"/>
    </location>
</feature>
<feature type="region of interest" description="Disordered" evidence="2">
    <location>
        <begin position="419"/>
        <end position="440"/>
    </location>
</feature>
<comment type="function">
    <text evidence="3">Responsible for the addition of alpha-(1-2) mannose branches to the linear mannan core on the biosynthetic pathway to mature Lipoarabinomannan (LAM).</text>
</comment>
<comment type="pathway">
    <text>Phospholipid metabolism; phosphatidylinositol metabolism.</text>
</comment>
<comment type="subcellular location">
    <subcellularLocation>
        <location evidence="4">Cell membrane</location>
        <topology evidence="4">Multi-pass membrane protein</topology>
    </subcellularLocation>
</comment>
<comment type="similarity">
    <text evidence="4">Belongs to the glycosyltransferase 87 family.</text>
</comment>
<comment type="sequence caution" evidence="4">
    <conflict type="erroneous initiation">
        <sequence resource="EMBL-CDS" id="AFP40604"/>
    </conflict>
    <text>Truncated N-terminus.</text>
</comment>
<gene>
    <name type="ordered locus">MSMEG_4247</name>
    <name type="ordered locus">MSMEI_4147</name>
</gene>
<accession>A0R036</accession>
<accession>I7GD51</accession>
<sequence>MLEMSKRQSPRGAGLAPTIAWRVFQLLTLAGVLWVGWRLLGRVPYRIDIDVYRMGGRAWLDGRPLYADGAIFHTQGGLDLPFTYPPLAAIAFAPFAWLSLPLASSAITATTLVLLIVATTIVLTRLDVWPHTTVTSEPAWMRRAWLAAAMVAPAVIYLEPIRSNFEFGQINVVLMTLVIADCVPRRTPWPRGLLLGLAIALKLTPAVFLLYFLLRRDIHTLLRTAATAVVASLAGFALAWSDSVEYWTETVRNTDRIGTATLNTNQNIAGALARLGLGESPRFILWVLACFAVLALTVWAARRALRGDTADQTTEAPVLALVCVALFGLVVSPVSWSHHWVWMLPVLVVTAVLAYRRRSVWFTALTAAGLALTVWTPITLLPEHRETTASLWRQLAGGSYVWWAFAVIVVIGLVSSSRTHTGDAHETDEPLVPLARGEAG</sequence>
<protein>
    <recommendedName>
        <fullName>Polyprenol-phosphate-mannose-dependent alpha-(1-2)-phosphatidylinositol mannoside mannosyltransferase</fullName>
        <ecNumber>2.4.1.-</ecNumber>
    </recommendedName>
    <alternativeName>
        <fullName>Alpha-D-mannose-alpha-(1-2)-mannosyltransferase</fullName>
    </alternativeName>
    <alternativeName>
        <fullName>Alpha-mannosyltransferase</fullName>
        <shortName>Alpha-ManT</shortName>
    </alternativeName>
    <alternativeName>
        <fullName>PPM-dependent mannosyltransferase</fullName>
    </alternativeName>
    <alternativeName>
        <fullName>Polyprenol-phosphate-mannose alpha-mannosyltransferase</fullName>
        <shortName>PPM alpha-mannosyltransferase</shortName>
    </alternativeName>
</protein>
<reference key="1">
    <citation type="submission" date="2006-10" db="EMBL/GenBank/DDBJ databases">
        <authorList>
            <person name="Fleischmann R.D."/>
            <person name="Dodson R.J."/>
            <person name="Haft D.H."/>
            <person name="Merkel J.S."/>
            <person name="Nelson W.C."/>
            <person name="Fraser C.M."/>
        </authorList>
    </citation>
    <scope>NUCLEOTIDE SEQUENCE [LARGE SCALE GENOMIC DNA]</scope>
    <source>
        <strain>ATCC 700084 / mc(2)155</strain>
    </source>
</reference>
<reference key="2">
    <citation type="journal article" date="2007" name="Genome Biol.">
        <title>Interrupted coding sequences in Mycobacterium smegmatis: authentic mutations or sequencing errors?</title>
        <authorList>
            <person name="Deshayes C."/>
            <person name="Perrodou E."/>
            <person name="Gallien S."/>
            <person name="Euphrasie D."/>
            <person name="Schaeffer C."/>
            <person name="Van-Dorsselaer A."/>
            <person name="Poch O."/>
            <person name="Lecompte O."/>
            <person name="Reyrat J.-M."/>
        </authorList>
    </citation>
    <scope>NUCLEOTIDE SEQUENCE [LARGE SCALE GENOMIC DNA]</scope>
    <source>
        <strain>ATCC 700084 / mc(2)155</strain>
    </source>
</reference>
<reference key="3">
    <citation type="journal article" date="2009" name="Genome Res.">
        <title>Ortho-proteogenomics: multiple proteomes investigation through orthology and a new MS-based protocol.</title>
        <authorList>
            <person name="Gallien S."/>
            <person name="Perrodou E."/>
            <person name="Carapito C."/>
            <person name="Deshayes C."/>
            <person name="Reyrat J.-M."/>
            <person name="Van Dorsselaer A."/>
            <person name="Poch O."/>
            <person name="Schaeffer C."/>
            <person name="Lecompte O."/>
        </authorList>
    </citation>
    <scope>NUCLEOTIDE SEQUENCE [LARGE SCALE GENOMIC DNA]</scope>
    <source>
        <strain>ATCC 700084 / mc(2)155</strain>
    </source>
</reference>
<reference key="4">
    <citation type="journal article" date="2006" name="Proc. Natl. Acad. Sci. U.S.A.">
        <title>Biosynthesis of mycobacterial lipoarabinomannan: role of a branching mannosyltransferase.</title>
        <authorList>
            <person name="Kaur D."/>
            <person name="Berg S."/>
            <person name="Dinadayala P."/>
            <person name="Gicquel B."/>
            <person name="Chatterjee D."/>
            <person name="McNeil M.R."/>
            <person name="Vissa V.D."/>
            <person name="Crick D.C."/>
            <person name="Jackson M."/>
            <person name="Brennan P.J."/>
        </authorList>
    </citation>
    <scope>FUNCTION IN LAM BIOSYNTHESIS</scope>
</reference>